<name>YQAE_BACSU</name>
<keyword id="KW-0238">DNA-binding</keyword>
<keyword id="KW-1185">Reference proteome</keyword>
<keyword id="KW-0804">Transcription</keyword>
<keyword id="KW-0805">Transcription regulation</keyword>
<feature type="chain" id="PRO_0000149750" description="Uncharacterized HTH-type transcriptional regulator YqaE">
    <location>
        <begin position="1"/>
        <end position="116"/>
    </location>
</feature>
<feature type="domain" description="HTH cro/C1-type" evidence="1">
    <location>
        <begin position="6"/>
        <end position="60"/>
    </location>
</feature>
<feature type="DNA-binding region" description="H-T-H motif" evidence="1">
    <location>
        <begin position="17"/>
        <end position="36"/>
    </location>
</feature>
<reference key="1">
    <citation type="journal article" date="1995" name="Microbiology">
        <title>Complete nucleotide sequence of a skin element excised by DNA rearrangement during sporulation in Bacillus subtilis.</title>
        <authorList>
            <person name="Takemaru K."/>
            <person name="Mizuno M."/>
            <person name="Sato T."/>
            <person name="Takeuchi M."/>
            <person name="Kobayashi Y."/>
        </authorList>
    </citation>
    <scope>NUCLEOTIDE SEQUENCE [GENOMIC DNA]</scope>
    <source>
        <strain>168 / JH642</strain>
    </source>
</reference>
<reference key="2">
    <citation type="journal article" date="1996" name="Microbiology">
        <title>Systematic sequencing of the 283 kb 210 degrees-232 degrees region of the Bacillus subtilis genome containing the skin element and many sporulation genes.</title>
        <authorList>
            <person name="Mizuno M."/>
            <person name="Masuda S."/>
            <person name="Takemaru K."/>
            <person name="Hosono S."/>
            <person name="Sato T."/>
            <person name="Takeuchi M."/>
            <person name="Kobayashi Y."/>
        </authorList>
    </citation>
    <scope>NUCLEOTIDE SEQUENCE [GENOMIC DNA]</scope>
    <source>
        <strain>168 / JH642</strain>
    </source>
</reference>
<reference key="3">
    <citation type="journal article" date="1997" name="Nature">
        <title>The complete genome sequence of the Gram-positive bacterium Bacillus subtilis.</title>
        <authorList>
            <person name="Kunst F."/>
            <person name="Ogasawara N."/>
            <person name="Moszer I."/>
            <person name="Albertini A.M."/>
            <person name="Alloni G."/>
            <person name="Azevedo V."/>
            <person name="Bertero M.G."/>
            <person name="Bessieres P."/>
            <person name="Bolotin A."/>
            <person name="Borchert S."/>
            <person name="Borriss R."/>
            <person name="Boursier L."/>
            <person name="Brans A."/>
            <person name="Braun M."/>
            <person name="Brignell S.C."/>
            <person name="Bron S."/>
            <person name="Brouillet S."/>
            <person name="Bruschi C.V."/>
            <person name="Caldwell B."/>
            <person name="Capuano V."/>
            <person name="Carter N.M."/>
            <person name="Choi S.-K."/>
            <person name="Codani J.-J."/>
            <person name="Connerton I.F."/>
            <person name="Cummings N.J."/>
            <person name="Daniel R.A."/>
            <person name="Denizot F."/>
            <person name="Devine K.M."/>
            <person name="Duesterhoeft A."/>
            <person name="Ehrlich S.D."/>
            <person name="Emmerson P.T."/>
            <person name="Entian K.-D."/>
            <person name="Errington J."/>
            <person name="Fabret C."/>
            <person name="Ferrari E."/>
            <person name="Foulger D."/>
            <person name="Fritz C."/>
            <person name="Fujita M."/>
            <person name="Fujita Y."/>
            <person name="Fuma S."/>
            <person name="Galizzi A."/>
            <person name="Galleron N."/>
            <person name="Ghim S.-Y."/>
            <person name="Glaser P."/>
            <person name="Goffeau A."/>
            <person name="Golightly E.J."/>
            <person name="Grandi G."/>
            <person name="Guiseppi G."/>
            <person name="Guy B.J."/>
            <person name="Haga K."/>
            <person name="Haiech J."/>
            <person name="Harwood C.R."/>
            <person name="Henaut A."/>
            <person name="Hilbert H."/>
            <person name="Holsappel S."/>
            <person name="Hosono S."/>
            <person name="Hullo M.-F."/>
            <person name="Itaya M."/>
            <person name="Jones L.-M."/>
            <person name="Joris B."/>
            <person name="Karamata D."/>
            <person name="Kasahara Y."/>
            <person name="Klaerr-Blanchard M."/>
            <person name="Klein C."/>
            <person name="Kobayashi Y."/>
            <person name="Koetter P."/>
            <person name="Koningstein G."/>
            <person name="Krogh S."/>
            <person name="Kumano M."/>
            <person name="Kurita K."/>
            <person name="Lapidus A."/>
            <person name="Lardinois S."/>
            <person name="Lauber J."/>
            <person name="Lazarevic V."/>
            <person name="Lee S.-M."/>
            <person name="Levine A."/>
            <person name="Liu H."/>
            <person name="Masuda S."/>
            <person name="Mauel C."/>
            <person name="Medigue C."/>
            <person name="Medina N."/>
            <person name="Mellado R.P."/>
            <person name="Mizuno M."/>
            <person name="Moestl D."/>
            <person name="Nakai S."/>
            <person name="Noback M."/>
            <person name="Noone D."/>
            <person name="O'Reilly M."/>
            <person name="Ogawa K."/>
            <person name="Ogiwara A."/>
            <person name="Oudega B."/>
            <person name="Park S.-H."/>
            <person name="Parro V."/>
            <person name="Pohl T.M."/>
            <person name="Portetelle D."/>
            <person name="Porwollik S."/>
            <person name="Prescott A.M."/>
            <person name="Presecan E."/>
            <person name="Pujic P."/>
            <person name="Purnelle B."/>
            <person name="Rapoport G."/>
            <person name="Rey M."/>
            <person name="Reynolds S."/>
            <person name="Rieger M."/>
            <person name="Rivolta C."/>
            <person name="Rocha E."/>
            <person name="Roche B."/>
            <person name="Rose M."/>
            <person name="Sadaie Y."/>
            <person name="Sato T."/>
            <person name="Scanlan E."/>
            <person name="Schleich S."/>
            <person name="Schroeter R."/>
            <person name="Scoffone F."/>
            <person name="Sekiguchi J."/>
            <person name="Sekowska A."/>
            <person name="Seror S.J."/>
            <person name="Serror P."/>
            <person name="Shin B.-S."/>
            <person name="Soldo B."/>
            <person name="Sorokin A."/>
            <person name="Tacconi E."/>
            <person name="Takagi T."/>
            <person name="Takahashi H."/>
            <person name="Takemaru K."/>
            <person name="Takeuchi M."/>
            <person name="Tamakoshi A."/>
            <person name="Tanaka T."/>
            <person name="Terpstra P."/>
            <person name="Tognoni A."/>
            <person name="Tosato V."/>
            <person name="Uchiyama S."/>
            <person name="Vandenbol M."/>
            <person name="Vannier F."/>
            <person name="Vassarotti A."/>
            <person name="Viari A."/>
            <person name="Wambutt R."/>
            <person name="Wedler E."/>
            <person name="Wedler H."/>
            <person name="Weitzenegger T."/>
            <person name="Winters P."/>
            <person name="Wipat A."/>
            <person name="Yamamoto H."/>
            <person name="Yamane K."/>
            <person name="Yasumoto K."/>
            <person name="Yata K."/>
            <person name="Yoshida K."/>
            <person name="Yoshikawa H.-F."/>
            <person name="Zumstein E."/>
            <person name="Yoshikawa H."/>
            <person name="Danchin A."/>
        </authorList>
    </citation>
    <scope>NUCLEOTIDE SEQUENCE [LARGE SCALE GENOMIC DNA]</scope>
    <source>
        <strain>168</strain>
    </source>
</reference>
<reference key="4">
    <citation type="journal article" date="1995" name="Gene">
        <title>Analysis of a Bacillus subtilis genome fragment using a co-operative computer system prototype.</title>
        <authorList>
            <person name="Medigue C."/>
            <person name="Moszer I."/>
            <person name="Viari A."/>
            <person name="Danchin A."/>
        </authorList>
    </citation>
    <scope>IDENTIFICATION</scope>
</reference>
<accession>P45902</accession>
<sequence>MFSENLKKCRKQKKLTQQNMADKLGITRPAYTAYELGSREPDYKTLINISNILDVSLDYLLKGESNEKVFQDEAKKVLNDPETFLAAKDGEVTDEILQAALEIITEQLKERRKSDK</sequence>
<gene>
    <name type="primary">yqaE</name>
    <name type="ordered locus">BSU26350</name>
</gene>
<proteinExistence type="predicted"/>
<evidence type="ECO:0000255" key="1">
    <source>
        <dbReference type="PROSITE-ProRule" id="PRU00257"/>
    </source>
</evidence>
<protein>
    <recommendedName>
        <fullName>Uncharacterized HTH-type transcriptional regulator YqaE</fullName>
    </recommendedName>
</protein>
<dbReference type="EMBL" id="D32216">
    <property type="protein sequence ID" value="BAA06918.1"/>
    <property type="molecule type" value="Genomic_DNA"/>
</dbReference>
<dbReference type="EMBL" id="D84432">
    <property type="protein sequence ID" value="BAA12379.1"/>
    <property type="molecule type" value="Genomic_DNA"/>
</dbReference>
<dbReference type="EMBL" id="AL009126">
    <property type="protein sequence ID" value="CAB14576.1"/>
    <property type="molecule type" value="Genomic_DNA"/>
</dbReference>
<dbReference type="PIR" id="D69944">
    <property type="entry name" value="D69944"/>
</dbReference>
<dbReference type="SMR" id="P45902"/>
<dbReference type="FunCoup" id="P45902">
    <property type="interactions" value="37"/>
</dbReference>
<dbReference type="STRING" id="224308.BSU26350"/>
<dbReference type="jPOST" id="P45902"/>
<dbReference type="PaxDb" id="224308-BSU26350"/>
<dbReference type="EnsemblBacteria" id="CAB14576">
    <property type="protein sequence ID" value="CAB14576"/>
    <property type="gene ID" value="BSU_26350"/>
</dbReference>
<dbReference type="GeneID" id="937672"/>
<dbReference type="KEGG" id="bsu:BSU26350"/>
<dbReference type="PATRIC" id="fig|224308.179.peg.2863"/>
<dbReference type="eggNOG" id="COG3620">
    <property type="taxonomic scope" value="Bacteria"/>
</dbReference>
<dbReference type="InParanoid" id="P45902"/>
<dbReference type="OrthoDB" id="72638at2"/>
<dbReference type="PhylomeDB" id="P45902"/>
<dbReference type="BioCyc" id="BSUB:BSU26350-MONOMER"/>
<dbReference type="Proteomes" id="UP000001570">
    <property type="component" value="Chromosome"/>
</dbReference>
<dbReference type="GO" id="GO:0003677">
    <property type="term" value="F:DNA binding"/>
    <property type="evidence" value="ECO:0007669"/>
    <property type="project" value="UniProtKB-KW"/>
</dbReference>
<dbReference type="CDD" id="cd00093">
    <property type="entry name" value="HTH_XRE"/>
    <property type="match status" value="1"/>
</dbReference>
<dbReference type="Gene3D" id="1.10.260.40">
    <property type="entry name" value="lambda repressor-like DNA-binding domains"/>
    <property type="match status" value="1"/>
</dbReference>
<dbReference type="InterPro" id="IPR001387">
    <property type="entry name" value="Cro/C1-type_HTH"/>
</dbReference>
<dbReference type="InterPro" id="IPR010982">
    <property type="entry name" value="Lambda_DNA-bd_dom_sf"/>
</dbReference>
<dbReference type="PANTHER" id="PTHR46558:SF14">
    <property type="entry name" value="HTH-TYPE TRANSCRIPTIONAL REGULATOR ANSR"/>
    <property type="match status" value="1"/>
</dbReference>
<dbReference type="PANTHER" id="PTHR46558">
    <property type="entry name" value="TRACRIPTIONAL REGULATORY PROTEIN-RELATED-RELATED"/>
    <property type="match status" value="1"/>
</dbReference>
<dbReference type="Pfam" id="PF01381">
    <property type="entry name" value="HTH_3"/>
    <property type="match status" value="1"/>
</dbReference>
<dbReference type="SMART" id="SM00530">
    <property type="entry name" value="HTH_XRE"/>
    <property type="match status" value="1"/>
</dbReference>
<dbReference type="SUPFAM" id="SSF47413">
    <property type="entry name" value="lambda repressor-like DNA-binding domains"/>
    <property type="match status" value="1"/>
</dbReference>
<dbReference type="PROSITE" id="PS50943">
    <property type="entry name" value="HTH_CROC1"/>
    <property type="match status" value="1"/>
</dbReference>
<organism>
    <name type="scientific">Bacillus subtilis (strain 168)</name>
    <dbReference type="NCBI Taxonomy" id="224308"/>
    <lineage>
        <taxon>Bacteria</taxon>
        <taxon>Bacillati</taxon>
        <taxon>Bacillota</taxon>
        <taxon>Bacilli</taxon>
        <taxon>Bacillales</taxon>
        <taxon>Bacillaceae</taxon>
        <taxon>Bacillus</taxon>
    </lineage>
</organism>